<comment type="function">
    <text evidence="1">Produces ATP from ADP in the presence of a proton gradient across the membrane.</text>
</comment>
<comment type="subunit">
    <text evidence="1">F-type ATPases have 2 components, CF(1) - the catalytic core - and CF(0) - the membrane proton channel. CF(1) has five subunits: alpha(3), beta(3), gamma(1), delta(1), epsilon(1). CF(0) has three main subunits: a, b and c.</text>
</comment>
<comment type="subcellular location">
    <subcellularLocation>
        <location evidence="1">Cell inner membrane</location>
        <topology evidence="1">Peripheral membrane protein</topology>
    </subcellularLocation>
</comment>
<comment type="similarity">
    <text evidence="1">Belongs to the ATPase epsilon chain family.</text>
</comment>
<organism>
    <name type="scientific">Cellvibrio japonicus (strain Ueda107)</name>
    <name type="common">Pseudomonas fluorescens subsp. cellulosa</name>
    <dbReference type="NCBI Taxonomy" id="498211"/>
    <lineage>
        <taxon>Bacteria</taxon>
        <taxon>Pseudomonadati</taxon>
        <taxon>Pseudomonadota</taxon>
        <taxon>Gammaproteobacteria</taxon>
        <taxon>Cellvibrionales</taxon>
        <taxon>Cellvibrionaceae</taxon>
        <taxon>Cellvibrio</taxon>
    </lineage>
</organism>
<gene>
    <name evidence="1" type="primary">atpC</name>
    <name type="ordered locus">CJA_3808</name>
</gene>
<accession>B3PIS6</accession>
<keyword id="KW-0066">ATP synthesis</keyword>
<keyword id="KW-0997">Cell inner membrane</keyword>
<keyword id="KW-1003">Cell membrane</keyword>
<keyword id="KW-0139">CF(1)</keyword>
<keyword id="KW-0375">Hydrogen ion transport</keyword>
<keyword id="KW-0406">Ion transport</keyword>
<keyword id="KW-0472">Membrane</keyword>
<keyword id="KW-1185">Reference proteome</keyword>
<keyword id="KW-0813">Transport</keyword>
<reference key="1">
    <citation type="journal article" date="2008" name="J. Bacteriol.">
        <title>Insights into plant cell wall degradation from the genome sequence of the soil bacterium Cellvibrio japonicus.</title>
        <authorList>
            <person name="DeBoy R.T."/>
            <person name="Mongodin E.F."/>
            <person name="Fouts D.E."/>
            <person name="Tailford L.E."/>
            <person name="Khouri H."/>
            <person name="Emerson J.B."/>
            <person name="Mohamoud Y."/>
            <person name="Watkins K."/>
            <person name="Henrissat B."/>
            <person name="Gilbert H.J."/>
            <person name="Nelson K.E."/>
        </authorList>
    </citation>
    <scope>NUCLEOTIDE SEQUENCE [LARGE SCALE GENOMIC DNA]</scope>
    <source>
        <strain>Ueda107</strain>
    </source>
</reference>
<evidence type="ECO:0000255" key="1">
    <source>
        <dbReference type="HAMAP-Rule" id="MF_00530"/>
    </source>
</evidence>
<feature type="chain" id="PRO_1000127835" description="ATP synthase epsilon chain">
    <location>
        <begin position="1"/>
        <end position="141"/>
    </location>
</feature>
<name>ATPE_CELJU</name>
<sequence>MAMTLQCDIVSAEREIFSGLVEMVVATGALGDLGVAYGHAPLLTSINPGPVRVIKQGGTEEIFYVSGGYLEVQPYHVTVLADTALRANDMDEAAALEAQERAQHQLAEQASEIDFQRAAVQLAEAAAQLRTLQAIKKKAGK</sequence>
<protein>
    <recommendedName>
        <fullName evidence="1">ATP synthase epsilon chain</fullName>
    </recommendedName>
    <alternativeName>
        <fullName evidence="1">ATP synthase F1 sector epsilon subunit</fullName>
    </alternativeName>
    <alternativeName>
        <fullName evidence="1">F-ATPase epsilon subunit</fullName>
    </alternativeName>
</protein>
<proteinExistence type="inferred from homology"/>
<dbReference type="EMBL" id="CP000934">
    <property type="protein sequence ID" value="ACE85964.1"/>
    <property type="molecule type" value="Genomic_DNA"/>
</dbReference>
<dbReference type="RefSeq" id="WP_012489371.1">
    <property type="nucleotide sequence ID" value="NC_010995.1"/>
</dbReference>
<dbReference type="SMR" id="B3PIS6"/>
<dbReference type="STRING" id="498211.CJA_3808"/>
<dbReference type="KEGG" id="cja:CJA_3808"/>
<dbReference type="eggNOG" id="COG0355">
    <property type="taxonomic scope" value="Bacteria"/>
</dbReference>
<dbReference type="HOGENOM" id="CLU_084338_2_0_6"/>
<dbReference type="OrthoDB" id="9791445at2"/>
<dbReference type="Proteomes" id="UP000001036">
    <property type="component" value="Chromosome"/>
</dbReference>
<dbReference type="GO" id="GO:0005886">
    <property type="term" value="C:plasma membrane"/>
    <property type="evidence" value="ECO:0007669"/>
    <property type="project" value="UniProtKB-SubCell"/>
</dbReference>
<dbReference type="GO" id="GO:0045259">
    <property type="term" value="C:proton-transporting ATP synthase complex"/>
    <property type="evidence" value="ECO:0007669"/>
    <property type="project" value="UniProtKB-KW"/>
</dbReference>
<dbReference type="GO" id="GO:0005524">
    <property type="term" value="F:ATP binding"/>
    <property type="evidence" value="ECO:0007669"/>
    <property type="project" value="UniProtKB-UniRule"/>
</dbReference>
<dbReference type="GO" id="GO:0046933">
    <property type="term" value="F:proton-transporting ATP synthase activity, rotational mechanism"/>
    <property type="evidence" value="ECO:0007669"/>
    <property type="project" value="UniProtKB-UniRule"/>
</dbReference>
<dbReference type="CDD" id="cd12152">
    <property type="entry name" value="F1-ATPase_delta"/>
    <property type="match status" value="1"/>
</dbReference>
<dbReference type="FunFam" id="2.60.15.10:FF:000001">
    <property type="entry name" value="ATP synthase epsilon chain"/>
    <property type="match status" value="1"/>
</dbReference>
<dbReference type="Gene3D" id="1.20.5.440">
    <property type="entry name" value="ATP synthase delta/epsilon subunit, C-terminal domain"/>
    <property type="match status" value="1"/>
</dbReference>
<dbReference type="Gene3D" id="2.60.15.10">
    <property type="entry name" value="F0F1 ATP synthase delta/epsilon subunit, N-terminal"/>
    <property type="match status" value="1"/>
</dbReference>
<dbReference type="HAMAP" id="MF_00530">
    <property type="entry name" value="ATP_synth_epsil_bac"/>
    <property type="match status" value="1"/>
</dbReference>
<dbReference type="InterPro" id="IPR036794">
    <property type="entry name" value="ATP_F1_dsu/esu_C_sf"/>
</dbReference>
<dbReference type="InterPro" id="IPR001469">
    <property type="entry name" value="ATP_synth_F1_dsu/esu"/>
</dbReference>
<dbReference type="InterPro" id="IPR020546">
    <property type="entry name" value="ATP_synth_F1_dsu/esu_N"/>
</dbReference>
<dbReference type="InterPro" id="IPR020547">
    <property type="entry name" value="ATP_synth_F1_esu_C"/>
</dbReference>
<dbReference type="InterPro" id="IPR036771">
    <property type="entry name" value="ATPsynth_dsu/esu_N"/>
</dbReference>
<dbReference type="NCBIfam" id="TIGR01216">
    <property type="entry name" value="ATP_synt_epsi"/>
    <property type="match status" value="1"/>
</dbReference>
<dbReference type="NCBIfam" id="NF001847">
    <property type="entry name" value="PRK00571.1-4"/>
    <property type="match status" value="1"/>
</dbReference>
<dbReference type="PANTHER" id="PTHR13822">
    <property type="entry name" value="ATP SYNTHASE DELTA/EPSILON CHAIN"/>
    <property type="match status" value="1"/>
</dbReference>
<dbReference type="PANTHER" id="PTHR13822:SF10">
    <property type="entry name" value="ATP SYNTHASE EPSILON CHAIN, CHLOROPLASTIC"/>
    <property type="match status" value="1"/>
</dbReference>
<dbReference type="Pfam" id="PF00401">
    <property type="entry name" value="ATP-synt_DE"/>
    <property type="match status" value="1"/>
</dbReference>
<dbReference type="Pfam" id="PF02823">
    <property type="entry name" value="ATP-synt_DE_N"/>
    <property type="match status" value="1"/>
</dbReference>
<dbReference type="SUPFAM" id="SSF46604">
    <property type="entry name" value="Epsilon subunit of F1F0-ATP synthase C-terminal domain"/>
    <property type="match status" value="1"/>
</dbReference>
<dbReference type="SUPFAM" id="SSF51344">
    <property type="entry name" value="Epsilon subunit of F1F0-ATP synthase N-terminal domain"/>
    <property type="match status" value="1"/>
</dbReference>